<feature type="chain" id="PRO_0000152467" description="Imidazole glycerol phosphate synthase subunit HisH">
    <location>
        <begin position="1"/>
        <end position="195"/>
    </location>
</feature>
<feature type="domain" description="Glutamine amidotransferase type-1" evidence="1">
    <location>
        <begin position="1"/>
        <end position="195"/>
    </location>
</feature>
<feature type="active site" description="Nucleophile" evidence="1">
    <location>
        <position position="72"/>
    </location>
</feature>
<feature type="active site" evidence="1">
    <location>
        <position position="177"/>
    </location>
</feature>
<feature type="active site" evidence="1">
    <location>
        <position position="179"/>
    </location>
</feature>
<protein>
    <recommendedName>
        <fullName evidence="1">Imidazole glycerol phosphate synthase subunit HisH</fullName>
        <ecNumber evidence="1">4.3.2.10</ecNumber>
    </recommendedName>
    <alternativeName>
        <fullName evidence="1">IGP synthase glutaminase subunit</fullName>
        <ecNumber evidence="1">3.5.1.2</ecNumber>
    </alternativeName>
    <alternativeName>
        <fullName evidence="1">IGP synthase subunit HisH</fullName>
    </alternativeName>
    <alternativeName>
        <fullName evidence="1">ImGP synthase subunit HisH</fullName>
        <shortName evidence="1">IGPS subunit HisH</shortName>
    </alternativeName>
</protein>
<sequence length="195" mass="21323">MIAVVDLGIGNLANVRKALGGVITSDPYAIEGAEKIVLPGVGNFGAVMEKLEPLRGVIIDAINDGKPLLGICLGLQLLFEGSEESPGKPGLGVFRGNVVRFQGVRVPHIGWNQVWQRKECPLFEGIKDGAYFYFVHSYYALPEEDVTVGVTDYESKGAKVVFTSAVCRDNVYAVQFHPEKSGRNGLRLLENFRRL</sequence>
<reference key="1">
    <citation type="journal article" date="2005" name="Genome Res.">
        <title>Complete genome sequence of the hyperthermophilic archaeon Thermococcus kodakaraensis KOD1 and comparison with Pyrococcus genomes.</title>
        <authorList>
            <person name="Fukui T."/>
            <person name="Atomi H."/>
            <person name="Kanai T."/>
            <person name="Matsumi R."/>
            <person name="Fujiwara S."/>
            <person name="Imanaka T."/>
        </authorList>
    </citation>
    <scope>NUCLEOTIDE SEQUENCE [LARGE SCALE GENOMIC DNA]</scope>
    <source>
        <strain>ATCC BAA-918 / JCM 12380 / KOD1</strain>
    </source>
</reference>
<gene>
    <name evidence="1" type="primary">hisH</name>
    <name type="ordered locus">TK0246</name>
</gene>
<accession>Q5JFV0</accession>
<comment type="function">
    <text evidence="1">IGPS catalyzes the conversion of PRFAR and glutamine to IGP, AICAR and glutamate. The HisH subunit catalyzes the hydrolysis of glutamine to glutamate and ammonia as part of the synthesis of IGP and AICAR. The resulting ammonia molecule is channeled to the active site of HisF.</text>
</comment>
<comment type="catalytic activity">
    <reaction evidence="1">
        <text>5-[(5-phospho-1-deoxy-D-ribulos-1-ylimino)methylamino]-1-(5-phospho-beta-D-ribosyl)imidazole-4-carboxamide + L-glutamine = D-erythro-1-(imidazol-4-yl)glycerol 3-phosphate + 5-amino-1-(5-phospho-beta-D-ribosyl)imidazole-4-carboxamide + L-glutamate + H(+)</text>
        <dbReference type="Rhea" id="RHEA:24793"/>
        <dbReference type="ChEBI" id="CHEBI:15378"/>
        <dbReference type="ChEBI" id="CHEBI:29985"/>
        <dbReference type="ChEBI" id="CHEBI:58278"/>
        <dbReference type="ChEBI" id="CHEBI:58359"/>
        <dbReference type="ChEBI" id="CHEBI:58475"/>
        <dbReference type="ChEBI" id="CHEBI:58525"/>
        <dbReference type="EC" id="4.3.2.10"/>
    </reaction>
</comment>
<comment type="catalytic activity">
    <reaction evidence="1">
        <text>L-glutamine + H2O = L-glutamate + NH4(+)</text>
        <dbReference type="Rhea" id="RHEA:15889"/>
        <dbReference type="ChEBI" id="CHEBI:15377"/>
        <dbReference type="ChEBI" id="CHEBI:28938"/>
        <dbReference type="ChEBI" id="CHEBI:29985"/>
        <dbReference type="ChEBI" id="CHEBI:58359"/>
        <dbReference type="EC" id="3.5.1.2"/>
    </reaction>
</comment>
<comment type="pathway">
    <text evidence="1">Amino-acid biosynthesis; L-histidine biosynthesis; L-histidine from 5-phospho-alpha-D-ribose 1-diphosphate: step 5/9.</text>
</comment>
<comment type="subunit">
    <text evidence="1">Heterodimer of HisH and HisF.</text>
</comment>
<comment type="subcellular location">
    <subcellularLocation>
        <location evidence="1">Cytoplasm</location>
    </subcellularLocation>
</comment>
<proteinExistence type="inferred from homology"/>
<dbReference type="EC" id="4.3.2.10" evidence="1"/>
<dbReference type="EC" id="3.5.1.2" evidence="1"/>
<dbReference type="EMBL" id="AP006878">
    <property type="protein sequence ID" value="BAD84435.1"/>
    <property type="molecule type" value="Genomic_DNA"/>
</dbReference>
<dbReference type="RefSeq" id="WP_011249201.1">
    <property type="nucleotide sequence ID" value="NC_006624.1"/>
</dbReference>
<dbReference type="SMR" id="Q5JFV0"/>
<dbReference type="FunCoup" id="Q5JFV0">
    <property type="interactions" value="61"/>
</dbReference>
<dbReference type="STRING" id="69014.TK0246"/>
<dbReference type="EnsemblBacteria" id="BAD84435">
    <property type="protein sequence ID" value="BAD84435"/>
    <property type="gene ID" value="TK0246"/>
</dbReference>
<dbReference type="GeneID" id="78446750"/>
<dbReference type="KEGG" id="tko:TK0246"/>
<dbReference type="PATRIC" id="fig|69014.16.peg.245"/>
<dbReference type="eggNOG" id="arCOG00089">
    <property type="taxonomic scope" value="Archaea"/>
</dbReference>
<dbReference type="HOGENOM" id="CLU_071837_2_2_2"/>
<dbReference type="InParanoid" id="Q5JFV0"/>
<dbReference type="OrthoDB" id="33401at2157"/>
<dbReference type="PhylomeDB" id="Q5JFV0"/>
<dbReference type="UniPathway" id="UPA00031">
    <property type="reaction ID" value="UER00010"/>
</dbReference>
<dbReference type="Proteomes" id="UP000000536">
    <property type="component" value="Chromosome"/>
</dbReference>
<dbReference type="GO" id="GO:0005737">
    <property type="term" value="C:cytoplasm"/>
    <property type="evidence" value="ECO:0007669"/>
    <property type="project" value="UniProtKB-SubCell"/>
</dbReference>
<dbReference type="GO" id="GO:0004359">
    <property type="term" value="F:glutaminase activity"/>
    <property type="evidence" value="ECO:0007669"/>
    <property type="project" value="UniProtKB-EC"/>
</dbReference>
<dbReference type="GO" id="GO:0000107">
    <property type="term" value="F:imidazoleglycerol-phosphate synthase activity"/>
    <property type="evidence" value="ECO:0000318"/>
    <property type="project" value="GO_Central"/>
</dbReference>
<dbReference type="GO" id="GO:0016829">
    <property type="term" value="F:lyase activity"/>
    <property type="evidence" value="ECO:0007669"/>
    <property type="project" value="UniProtKB-KW"/>
</dbReference>
<dbReference type="GO" id="GO:0000105">
    <property type="term" value="P:L-histidine biosynthetic process"/>
    <property type="evidence" value="ECO:0007669"/>
    <property type="project" value="UniProtKB-UniRule"/>
</dbReference>
<dbReference type="CDD" id="cd01748">
    <property type="entry name" value="GATase1_IGP_Synthase"/>
    <property type="match status" value="1"/>
</dbReference>
<dbReference type="FunFam" id="3.40.50.880:FF:000009">
    <property type="entry name" value="Imidazole glycerol phosphate synthase subunit HisH"/>
    <property type="match status" value="1"/>
</dbReference>
<dbReference type="Gene3D" id="3.40.50.880">
    <property type="match status" value="1"/>
</dbReference>
<dbReference type="HAMAP" id="MF_00278">
    <property type="entry name" value="HisH"/>
    <property type="match status" value="1"/>
</dbReference>
<dbReference type="InterPro" id="IPR029062">
    <property type="entry name" value="Class_I_gatase-like"/>
</dbReference>
<dbReference type="InterPro" id="IPR017926">
    <property type="entry name" value="GATASE"/>
</dbReference>
<dbReference type="InterPro" id="IPR010139">
    <property type="entry name" value="Imidazole-glycPsynth_HisH"/>
</dbReference>
<dbReference type="NCBIfam" id="TIGR01855">
    <property type="entry name" value="IMP_synth_hisH"/>
    <property type="match status" value="1"/>
</dbReference>
<dbReference type="PANTHER" id="PTHR42701">
    <property type="entry name" value="IMIDAZOLE GLYCEROL PHOSPHATE SYNTHASE SUBUNIT HISH"/>
    <property type="match status" value="1"/>
</dbReference>
<dbReference type="PANTHER" id="PTHR42701:SF1">
    <property type="entry name" value="IMIDAZOLE GLYCEROL PHOSPHATE SYNTHASE SUBUNIT HISH"/>
    <property type="match status" value="1"/>
</dbReference>
<dbReference type="Pfam" id="PF00117">
    <property type="entry name" value="GATase"/>
    <property type="match status" value="1"/>
</dbReference>
<dbReference type="PIRSF" id="PIRSF000495">
    <property type="entry name" value="Amidotransf_hisH"/>
    <property type="match status" value="1"/>
</dbReference>
<dbReference type="SUPFAM" id="SSF52317">
    <property type="entry name" value="Class I glutamine amidotransferase-like"/>
    <property type="match status" value="1"/>
</dbReference>
<dbReference type="PROSITE" id="PS51273">
    <property type="entry name" value="GATASE_TYPE_1"/>
    <property type="match status" value="1"/>
</dbReference>
<organism>
    <name type="scientific">Thermococcus kodakarensis (strain ATCC BAA-918 / JCM 12380 / KOD1)</name>
    <name type="common">Pyrococcus kodakaraensis (strain KOD1)</name>
    <dbReference type="NCBI Taxonomy" id="69014"/>
    <lineage>
        <taxon>Archaea</taxon>
        <taxon>Methanobacteriati</taxon>
        <taxon>Methanobacteriota</taxon>
        <taxon>Thermococci</taxon>
        <taxon>Thermococcales</taxon>
        <taxon>Thermococcaceae</taxon>
        <taxon>Thermococcus</taxon>
    </lineage>
</organism>
<name>HIS5_THEKO</name>
<keyword id="KW-0028">Amino-acid biosynthesis</keyword>
<keyword id="KW-0963">Cytoplasm</keyword>
<keyword id="KW-0315">Glutamine amidotransferase</keyword>
<keyword id="KW-0368">Histidine biosynthesis</keyword>
<keyword id="KW-0378">Hydrolase</keyword>
<keyword id="KW-0456">Lyase</keyword>
<keyword id="KW-1185">Reference proteome</keyword>
<evidence type="ECO:0000255" key="1">
    <source>
        <dbReference type="HAMAP-Rule" id="MF_00278"/>
    </source>
</evidence>